<reference key="1">
    <citation type="journal article" date="2009" name="PLoS Genet.">
        <title>Organised genome dynamics in the Escherichia coli species results in highly diverse adaptive paths.</title>
        <authorList>
            <person name="Touchon M."/>
            <person name="Hoede C."/>
            <person name="Tenaillon O."/>
            <person name="Barbe V."/>
            <person name="Baeriswyl S."/>
            <person name="Bidet P."/>
            <person name="Bingen E."/>
            <person name="Bonacorsi S."/>
            <person name="Bouchier C."/>
            <person name="Bouvet O."/>
            <person name="Calteau A."/>
            <person name="Chiapello H."/>
            <person name="Clermont O."/>
            <person name="Cruveiller S."/>
            <person name="Danchin A."/>
            <person name="Diard M."/>
            <person name="Dossat C."/>
            <person name="Karoui M.E."/>
            <person name="Frapy E."/>
            <person name="Garry L."/>
            <person name="Ghigo J.M."/>
            <person name="Gilles A.M."/>
            <person name="Johnson J."/>
            <person name="Le Bouguenec C."/>
            <person name="Lescat M."/>
            <person name="Mangenot S."/>
            <person name="Martinez-Jehanne V."/>
            <person name="Matic I."/>
            <person name="Nassif X."/>
            <person name="Oztas S."/>
            <person name="Petit M.A."/>
            <person name="Pichon C."/>
            <person name="Rouy Z."/>
            <person name="Ruf C.S."/>
            <person name="Schneider D."/>
            <person name="Tourret J."/>
            <person name="Vacherie B."/>
            <person name="Vallenet D."/>
            <person name="Medigue C."/>
            <person name="Rocha E.P.C."/>
            <person name="Denamur E."/>
        </authorList>
    </citation>
    <scope>NUCLEOTIDE SEQUENCE [LARGE SCALE GENOMIC DNA]</scope>
    <source>
        <strain>IAI1</strain>
    </source>
</reference>
<organism>
    <name type="scientific">Escherichia coli O8 (strain IAI1)</name>
    <dbReference type="NCBI Taxonomy" id="585034"/>
    <lineage>
        <taxon>Bacteria</taxon>
        <taxon>Pseudomonadati</taxon>
        <taxon>Pseudomonadota</taxon>
        <taxon>Gammaproteobacteria</taxon>
        <taxon>Enterobacterales</taxon>
        <taxon>Enterobacteriaceae</taxon>
        <taxon>Escherichia</taxon>
    </lineage>
</organism>
<gene>
    <name evidence="1" type="primary">uxaB</name>
    <name type="ordered locus">ECIAI1_1533</name>
</gene>
<keyword id="KW-0520">NAD</keyword>
<keyword id="KW-0560">Oxidoreductase</keyword>
<evidence type="ECO:0000255" key="1">
    <source>
        <dbReference type="HAMAP-Rule" id="MF_00670"/>
    </source>
</evidence>
<dbReference type="EC" id="1.1.1.58" evidence="1"/>
<dbReference type="EMBL" id="CU928160">
    <property type="protein sequence ID" value="CAQ98390.1"/>
    <property type="molecule type" value="Genomic_DNA"/>
</dbReference>
<dbReference type="RefSeq" id="WP_000854624.1">
    <property type="nucleotide sequence ID" value="NC_011741.1"/>
</dbReference>
<dbReference type="SMR" id="B7LZC3"/>
<dbReference type="GeneID" id="75202151"/>
<dbReference type="KEGG" id="ecr:ECIAI1_1533"/>
<dbReference type="HOGENOM" id="CLU_027324_1_0_6"/>
<dbReference type="UniPathway" id="UPA00246"/>
<dbReference type="GO" id="GO:0005829">
    <property type="term" value="C:cytosol"/>
    <property type="evidence" value="ECO:0007669"/>
    <property type="project" value="TreeGrafter"/>
</dbReference>
<dbReference type="GO" id="GO:0008926">
    <property type="term" value="F:mannitol-1-phosphate 5-dehydrogenase activity"/>
    <property type="evidence" value="ECO:0007669"/>
    <property type="project" value="TreeGrafter"/>
</dbReference>
<dbReference type="GO" id="GO:0009026">
    <property type="term" value="F:tagaturonate reductase activity"/>
    <property type="evidence" value="ECO:0007669"/>
    <property type="project" value="UniProtKB-UniRule"/>
</dbReference>
<dbReference type="GO" id="GO:0019698">
    <property type="term" value="P:D-galacturonate catabolic process"/>
    <property type="evidence" value="ECO:0007669"/>
    <property type="project" value="TreeGrafter"/>
</dbReference>
<dbReference type="GO" id="GO:0019592">
    <property type="term" value="P:mannitol catabolic process"/>
    <property type="evidence" value="ECO:0007669"/>
    <property type="project" value="TreeGrafter"/>
</dbReference>
<dbReference type="FunFam" id="1.10.1040.10:FF:000018">
    <property type="entry name" value="Altronate oxidoreductase"/>
    <property type="match status" value="1"/>
</dbReference>
<dbReference type="FunFam" id="3.40.50.720:FF:000153">
    <property type="entry name" value="Altronate oxidoreductase"/>
    <property type="match status" value="1"/>
</dbReference>
<dbReference type="Gene3D" id="1.10.1040.10">
    <property type="entry name" value="N-(1-d-carboxylethyl)-l-norvaline Dehydrogenase, domain 2"/>
    <property type="match status" value="1"/>
</dbReference>
<dbReference type="Gene3D" id="3.40.50.720">
    <property type="entry name" value="NAD(P)-binding Rossmann-like Domain"/>
    <property type="match status" value="1"/>
</dbReference>
<dbReference type="HAMAP" id="MF_00670">
    <property type="entry name" value="Altron_oxidoreduct"/>
    <property type="match status" value="1"/>
</dbReference>
<dbReference type="InterPro" id="IPR008927">
    <property type="entry name" value="6-PGluconate_DH-like_C_sf"/>
</dbReference>
<dbReference type="InterPro" id="IPR013328">
    <property type="entry name" value="6PGD_dom2"/>
</dbReference>
<dbReference type="InterPro" id="IPR023668">
    <property type="entry name" value="Altronate_OxRdtase"/>
</dbReference>
<dbReference type="InterPro" id="IPR013118">
    <property type="entry name" value="Mannitol_DH_C"/>
</dbReference>
<dbReference type="InterPro" id="IPR013131">
    <property type="entry name" value="Mannitol_DH_N"/>
</dbReference>
<dbReference type="InterPro" id="IPR036291">
    <property type="entry name" value="NAD(P)-bd_dom_sf"/>
</dbReference>
<dbReference type="NCBIfam" id="NF002969">
    <property type="entry name" value="PRK03643.1"/>
    <property type="match status" value="1"/>
</dbReference>
<dbReference type="PANTHER" id="PTHR30524:SF0">
    <property type="entry name" value="ALTRONATE OXIDOREDUCTASE-RELATED"/>
    <property type="match status" value="1"/>
</dbReference>
<dbReference type="PANTHER" id="PTHR30524">
    <property type="entry name" value="MANNITOL-1-PHOSPHATE 5-DEHYDROGENASE"/>
    <property type="match status" value="1"/>
</dbReference>
<dbReference type="Pfam" id="PF01232">
    <property type="entry name" value="Mannitol_dh"/>
    <property type="match status" value="1"/>
</dbReference>
<dbReference type="Pfam" id="PF08125">
    <property type="entry name" value="Mannitol_dh_C"/>
    <property type="match status" value="1"/>
</dbReference>
<dbReference type="SUPFAM" id="SSF48179">
    <property type="entry name" value="6-phosphogluconate dehydrogenase C-terminal domain-like"/>
    <property type="match status" value="1"/>
</dbReference>
<dbReference type="SUPFAM" id="SSF51735">
    <property type="entry name" value="NAD(P)-binding Rossmann-fold domains"/>
    <property type="match status" value="1"/>
</dbReference>
<accession>B7LZC3</accession>
<name>UXAB_ECO8A</name>
<sequence>MKTLNRRDFPGAQYPERIIQFGEGNFLRAFVDWQIDLLNEHTDLNSGVVVVRPIETSFPPSLSTQDGLYTTIIRGLNEKGEAVSDARLIRSVNREISVYSEYDEFLKLAHNPEMRFVFSNTTEAGISYHAGDKFDDAPAVSYPAKLTRLLFERFSHFNGALDKGWIIIPCELIDYNGDALRELVLRYAQEWALPEAFIQWLDQANSFCSTLVDRIVTGYPRDEVAKLEEELGYHDGFLDTAEHFYLFVIQGPKSLATELRLDKYPLNVLIVDDIKPYKERKVAILNGAHTALVPVAFQAGLDTVGEAMNDAEICAFVEKAIYEEIIPVLDLPRDELESFASAVTGRFRNPYIKHQLLSIALNGMTKFRTRILPQLLAGQKAKGTLPARLTFALAALIAFYRGERNGETYPVQDDAHWLERYQQLWSQHRDRVIGTQELVAIVLAEKDHWEQDLTQVPGLVEQVANDLDAILEKGMREAVRPLC</sequence>
<proteinExistence type="inferred from homology"/>
<protein>
    <recommendedName>
        <fullName evidence="1">Altronate oxidoreductase</fullName>
        <ecNumber evidence="1">1.1.1.58</ecNumber>
    </recommendedName>
    <alternativeName>
        <fullName evidence="1">Tagaturonate dehydrogenase</fullName>
    </alternativeName>
    <alternativeName>
        <fullName evidence="1">Tagaturonate reductase</fullName>
    </alternativeName>
</protein>
<feature type="chain" id="PRO_1000131509" description="Altronate oxidoreductase">
    <location>
        <begin position="1"/>
        <end position="483"/>
    </location>
</feature>
<feature type="binding site" evidence="1">
    <location>
        <begin position="18"/>
        <end position="29"/>
    </location>
    <ligand>
        <name>NAD(+)</name>
        <dbReference type="ChEBI" id="CHEBI:57540"/>
    </ligand>
</feature>
<comment type="catalytic activity">
    <reaction evidence="1">
        <text>D-altronate + NAD(+) = keto-D-tagaturonate + NADH + H(+)</text>
        <dbReference type="Rhea" id="RHEA:17813"/>
        <dbReference type="ChEBI" id="CHEBI:15378"/>
        <dbReference type="ChEBI" id="CHEBI:17360"/>
        <dbReference type="ChEBI" id="CHEBI:17886"/>
        <dbReference type="ChEBI" id="CHEBI:57540"/>
        <dbReference type="ChEBI" id="CHEBI:57945"/>
        <dbReference type="EC" id="1.1.1.58"/>
    </reaction>
</comment>
<comment type="pathway">
    <text evidence="1">Carbohydrate metabolism; pentose and glucuronate interconversion.</text>
</comment>
<comment type="similarity">
    <text evidence="1">Belongs to the mannitol dehydrogenase family. UxaB subfamily.</text>
</comment>